<reference key="1">
    <citation type="journal article" date="1998" name="DNA Res.">
        <title>Complete sequence and gene organization of the genome of a hyper-thermophilic archaebacterium, Pyrococcus horikoshii OT3.</title>
        <authorList>
            <person name="Kawarabayasi Y."/>
            <person name="Sawada M."/>
            <person name="Horikawa H."/>
            <person name="Haikawa Y."/>
            <person name="Hino Y."/>
            <person name="Yamamoto S."/>
            <person name="Sekine M."/>
            <person name="Baba S."/>
            <person name="Kosugi H."/>
            <person name="Hosoyama A."/>
            <person name="Nagai Y."/>
            <person name="Sakai M."/>
            <person name="Ogura K."/>
            <person name="Otsuka R."/>
            <person name="Nakazawa H."/>
            <person name="Takamiya M."/>
            <person name="Ohfuku Y."/>
            <person name="Funahashi T."/>
            <person name="Tanaka T."/>
            <person name="Kudoh Y."/>
            <person name="Yamazaki J."/>
            <person name="Kushida N."/>
            <person name="Oguchi A."/>
            <person name="Aoki K."/>
            <person name="Yoshizawa T."/>
            <person name="Nakamura Y."/>
            <person name="Robb F.T."/>
            <person name="Horikoshi K."/>
            <person name="Masuchi Y."/>
            <person name="Shizuya H."/>
            <person name="Kikuchi H."/>
        </authorList>
    </citation>
    <scope>NUCLEOTIDE SEQUENCE [LARGE SCALE GENOMIC DNA]</scope>
    <source>
        <strain>ATCC 700860 / DSM 12428 / JCM 9974 / NBRC 100139 / OT-3</strain>
    </source>
</reference>
<comment type="function">
    <text evidence="1">Essential cell division protein that forms a contractile ring structure (Z ring) at the future cell division site. The regulation of the ring assembly controls the timing and the location of cell division. One of the functions of the FtsZ ring is to recruit other cell division proteins to the septum to produce a new cell wall between the dividing cells. Binds GTP and shows GTPase activity.</text>
</comment>
<comment type="subunit">
    <text evidence="1">Homodimer. Polymerizes to form a dynamic ring structure in a strictly GTP-dependent manner. Interacts directly with several other division proteins.</text>
</comment>
<comment type="subcellular location">
    <subcellularLocation>
        <location evidence="1">Cytoplasm</location>
    </subcellularLocation>
    <text evidence="1">Assembles at midcell at the inner surface of the cytoplasmic membrane.</text>
</comment>
<comment type="similarity">
    <text evidence="1">Belongs to the FtsZ family.</text>
</comment>
<accession>O57776</accession>
<evidence type="ECO:0000255" key="1">
    <source>
        <dbReference type="HAMAP-Rule" id="MF_00909"/>
    </source>
</evidence>
<evidence type="ECO:0000256" key="2">
    <source>
        <dbReference type="SAM" id="MobiDB-lite"/>
    </source>
</evidence>
<dbReference type="EMBL" id="BA000001">
    <property type="protein sequence ID" value="BAA29071.1"/>
    <property type="molecule type" value="Genomic_DNA"/>
</dbReference>
<dbReference type="PIR" id="H71217">
    <property type="entry name" value="H71217"/>
</dbReference>
<dbReference type="RefSeq" id="WP_010884123.1">
    <property type="nucleotide sequence ID" value="NC_000961.1"/>
</dbReference>
<dbReference type="SMR" id="O57776"/>
<dbReference type="STRING" id="70601.gene:9376909"/>
<dbReference type="EnsemblBacteria" id="BAA29071">
    <property type="protein sequence ID" value="BAA29071"/>
    <property type="gene ID" value="BAA29071"/>
</dbReference>
<dbReference type="GeneID" id="1443905"/>
<dbReference type="KEGG" id="pho:PH0003"/>
<dbReference type="eggNOG" id="arCOG02201">
    <property type="taxonomic scope" value="Archaea"/>
</dbReference>
<dbReference type="OrthoDB" id="371908at2157"/>
<dbReference type="Proteomes" id="UP000000752">
    <property type="component" value="Chromosome"/>
</dbReference>
<dbReference type="GO" id="GO:0032153">
    <property type="term" value="C:cell division site"/>
    <property type="evidence" value="ECO:0007669"/>
    <property type="project" value="UniProtKB-UniRule"/>
</dbReference>
<dbReference type="GO" id="GO:0005737">
    <property type="term" value="C:cytoplasm"/>
    <property type="evidence" value="ECO:0007669"/>
    <property type="project" value="UniProtKB-SubCell"/>
</dbReference>
<dbReference type="GO" id="GO:0005525">
    <property type="term" value="F:GTP binding"/>
    <property type="evidence" value="ECO:0007669"/>
    <property type="project" value="UniProtKB-UniRule"/>
</dbReference>
<dbReference type="GO" id="GO:0003924">
    <property type="term" value="F:GTPase activity"/>
    <property type="evidence" value="ECO:0007669"/>
    <property type="project" value="UniProtKB-UniRule"/>
</dbReference>
<dbReference type="GO" id="GO:0043093">
    <property type="term" value="P:FtsZ-dependent cytokinesis"/>
    <property type="evidence" value="ECO:0007669"/>
    <property type="project" value="UniProtKB-UniRule"/>
</dbReference>
<dbReference type="GO" id="GO:0051258">
    <property type="term" value="P:protein polymerization"/>
    <property type="evidence" value="ECO:0007669"/>
    <property type="project" value="UniProtKB-UniRule"/>
</dbReference>
<dbReference type="CDD" id="cd02201">
    <property type="entry name" value="FtsZ_type1"/>
    <property type="match status" value="1"/>
</dbReference>
<dbReference type="FunFam" id="3.40.50.1440:FF:000023">
    <property type="entry name" value="Cell division protein FtsZ"/>
    <property type="match status" value="1"/>
</dbReference>
<dbReference type="Gene3D" id="3.30.1330.20">
    <property type="entry name" value="Tubulin/FtsZ, C-terminal domain"/>
    <property type="match status" value="1"/>
</dbReference>
<dbReference type="Gene3D" id="3.40.50.1440">
    <property type="entry name" value="Tubulin/FtsZ, GTPase domain"/>
    <property type="match status" value="1"/>
</dbReference>
<dbReference type="HAMAP" id="MF_00909">
    <property type="entry name" value="FtsZ"/>
    <property type="match status" value="1"/>
</dbReference>
<dbReference type="InterPro" id="IPR000158">
    <property type="entry name" value="Cell_div_FtsZ"/>
</dbReference>
<dbReference type="InterPro" id="IPR020805">
    <property type="entry name" value="Cell_div_FtsZ_CS"/>
</dbReference>
<dbReference type="InterPro" id="IPR045061">
    <property type="entry name" value="FtsZ/CetZ"/>
</dbReference>
<dbReference type="InterPro" id="IPR024757">
    <property type="entry name" value="FtsZ_C"/>
</dbReference>
<dbReference type="InterPro" id="IPR008280">
    <property type="entry name" value="Tub_FtsZ_C"/>
</dbReference>
<dbReference type="InterPro" id="IPR037103">
    <property type="entry name" value="Tubulin/FtsZ-like_C"/>
</dbReference>
<dbReference type="InterPro" id="IPR018316">
    <property type="entry name" value="Tubulin/FtsZ_2-layer-sand-dom"/>
</dbReference>
<dbReference type="InterPro" id="IPR036525">
    <property type="entry name" value="Tubulin/FtsZ_GTPase_sf"/>
</dbReference>
<dbReference type="InterPro" id="IPR003008">
    <property type="entry name" value="Tubulin_FtsZ_GTPase"/>
</dbReference>
<dbReference type="NCBIfam" id="TIGR00065">
    <property type="entry name" value="ftsZ"/>
    <property type="match status" value="1"/>
</dbReference>
<dbReference type="PANTHER" id="PTHR30314">
    <property type="entry name" value="CELL DIVISION PROTEIN FTSZ-RELATED"/>
    <property type="match status" value="1"/>
</dbReference>
<dbReference type="PANTHER" id="PTHR30314:SF3">
    <property type="entry name" value="MITOCHONDRIAL DIVISION PROTEIN FSZA"/>
    <property type="match status" value="1"/>
</dbReference>
<dbReference type="Pfam" id="PF12327">
    <property type="entry name" value="FtsZ_C"/>
    <property type="match status" value="1"/>
</dbReference>
<dbReference type="Pfam" id="PF00091">
    <property type="entry name" value="Tubulin"/>
    <property type="match status" value="1"/>
</dbReference>
<dbReference type="PRINTS" id="PR00423">
    <property type="entry name" value="CELLDVISFTSZ"/>
</dbReference>
<dbReference type="SMART" id="SM00864">
    <property type="entry name" value="Tubulin"/>
    <property type="match status" value="1"/>
</dbReference>
<dbReference type="SMART" id="SM00865">
    <property type="entry name" value="Tubulin_C"/>
    <property type="match status" value="1"/>
</dbReference>
<dbReference type="SUPFAM" id="SSF55307">
    <property type="entry name" value="Tubulin C-terminal domain-like"/>
    <property type="match status" value="1"/>
</dbReference>
<dbReference type="SUPFAM" id="SSF52490">
    <property type="entry name" value="Tubulin nucleotide-binding domain-like"/>
    <property type="match status" value="1"/>
</dbReference>
<dbReference type="PROSITE" id="PS01134">
    <property type="entry name" value="FTSZ_1"/>
    <property type="match status" value="1"/>
</dbReference>
<dbReference type="PROSITE" id="PS01135">
    <property type="entry name" value="FTSZ_2"/>
    <property type="match status" value="1"/>
</dbReference>
<name>FTSZ1_PYRHO</name>
<organism>
    <name type="scientific">Pyrococcus horikoshii (strain ATCC 700860 / DSM 12428 / JCM 9974 / NBRC 100139 / OT-3)</name>
    <dbReference type="NCBI Taxonomy" id="70601"/>
    <lineage>
        <taxon>Archaea</taxon>
        <taxon>Methanobacteriati</taxon>
        <taxon>Methanobacteriota</taxon>
        <taxon>Thermococci</taxon>
        <taxon>Thermococcales</taxon>
        <taxon>Thermococcaceae</taxon>
        <taxon>Pyrococcus</taxon>
    </lineage>
</organism>
<proteinExistence type="inferred from homology"/>
<feature type="chain" id="PRO_0000114406" description="Cell division protein FtsZ 1">
    <location>
        <begin position="1"/>
        <end position="372"/>
    </location>
</feature>
<feature type="region of interest" description="Disordered" evidence="2">
    <location>
        <begin position="352"/>
        <end position="372"/>
    </location>
</feature>
<feature type="binding site" evidence="1">
    <location>
        <begin position="51"/>
        <end position="55"/>
    </location>
    <ligand>
        <name>GTP</name>
        <dbReference type="ChEBI" id="CHEBI:37565"/>
    </ligand>
</feature>
<feature type="binding site" evidence="1">
    <location>
        <begin position="138"/>
        <end position="140"/>
    </location>
    <ligand>
        <name>GTP</name>
        <dbReference type="ChEBI" id="CHEBI:37565"/>
    </ligand>
</feature>
<feature type="binding site" evidence="1">
    <location>
        <position position="169"/>
    </location>
    <ligand>
        <name>GTP</name>
        <dbReference type="ChEBI" id="CHEBI:37565"/>
    </ligand>
</feature>
<feature type="binding site" evidence="1">
    <location>
        <position position="173"/>
    </location>
    <ligand>
        <name>GTP</name>
        <dbReference type="ChEBI" id="CHEBI:37565"/>
    </ligand>
</feature>
<feature type="binding site" evidence="1">
    <location>
        <position position="216"/>
    </location>
    <ligand>
        <name>GTP</name>
        <dbReference type="ChEBI" id="CHEBI:37565"/>
    </ligand>
</feature>
<protein>
    <recommendedName>
        <fullName evidence="1">Cell division protein FtsZ 1</fullName>
    </recommendedName>
</protein>
<sequence>MLKLVENVVERVSSEETKVQEVQVPQSSIDEELKKIVEQIKARIHVVGVGGAGCNTVNRMMEVGVTGAKIIAVNTDAQDLLKVKAHQKILIGKEITRGLGAGNDPKIGEEAAKESEREIREALEGADMVFVTCGLGGGTGTGAAPVIAEMARKMGALTVSVVTLPFTMEGIRRAKNAEYGLKRLAKASDTVIVIPNDKLLEVAPKLPIQMAFKVADEILVQAVKGITELITKPGLVNLDFNDVRAVMKDGGVAMIGIGESDSEKRALEAAEQALNSPLLDVDISGAKGALISISGADVKLEEAQQIIEYVTRNVDPKAQVIWGIQLEPELEKTIRVMVIVTGITSRYVTFQEETPAPSEEETTPVKIDIPEL</sequence>
<keyword id="KW-0131">Cell cycle</keyword>
<keyword id="KW-0132">Cell division</keyword>
<keyword id="KW-0963">Cytoplasm</keyword>
<keyword id="KW-0342">GTP-binding</keyword>
<keyword id="KW-0547">Nucleotide-binding</keyword>
<keyword id="KW-0717">Septation</keyword>
<gene>
    <name evidence="1" type="primary">ftsZ1</name>
    <name type="ordered locus">PH0003</name>
</gene>